<gene>
    <name type="primary">FOXA2</name>
    <name type="synonym">HNF3B</name>
    <name type="synonym">TCF3B</name>
</gene>
<accession>Q9Y261</accession>
<accession>Q8WUW4</accession>
<accession>Q96DF7</accession>
<reference key="1">
    <citation type="journal article" date="2000" name="Diabetologia">
        <title>Cloning of cDNA and the gene encoding human hepatocyte nuclear factor (HNF)-3 beta and mutation screening in Japanese subjects with maturity-onset diabetes of the young.</title>
        <authorList>
            <person name="Yamada S."/>
            <person name="Zhu Q."/>
            <person name="Aihara Y."/>
            <person name="Onda H."/>
            <person name="Zhang Z."/>
            <person name="Yu L."/>
            <person name="Jin L."/>
            <person name="Si Y.J."/>
            <person name="Nishigori H."/>
            <person name="Tomura H."/>
            <person name="Inoue I."/>
            <person name="Morikawa A."/>
            <person name="Yamagata K."/>
            <person name="Hanafusa T."/>
            <person name="Matsuzawa Y."/>
            <person name="Takeda J."/>
        </authorList>
    </citation>
    <scope>NUCLEOTIDE SEQUENCE [GENOMIC DNA / MRNA] (ISOFORM 1)</scope>
    <scope>VARIANT VAL-328</scope>
    <source>
        <tissue>Liver</tissue>
    </source>
</reference>
<reference key="2">
    <citation type="submission" date="1999-05" db="EMBL/GenBank/DDBJ databases">
        <title>No evidence for diabetes-associated mutations in the hepatocyte nuclear factor-3 beta gene in Japanese patients with MODY.</title>
        <authorList>
            <person name="Hinokio Y."/>
            <person name="Horikawa Y."/>
            <person name="Furuta H."/>
            <person name="Cox N.J."/>
            <person name="Iwasaki N."/>
            <person name="Honda M."/>
            <person name="Ogata M."/>
            <person name="Iwamoto Y."/>
            <person name="Bell G.I."/>
        </authorList>
    </citation>
    <scope>NUCLEOTIDE SEQUENCE [GENOMIC DNA]</scope>
</reference>
<reference key="3">
    <citation type="journal article" date="2000" name="Hum. Hered.">
        <title>The human HNF-3 genes: cloning, partial sequence and mutation screening in patients with impaired glucose homeostasis.</title>
        <authorList>
            <person name="Navas M.A."/>
            <person name="Vaisse C."/>
            <person name="Boger S."/>
            <person name="Heimesaat M."/>
            <person name="Kollee L.A."/>
            <person name="Stoffel M."/>
        </authorList>
    </citation>
    <scope>NUCLEOTIDE SEQUENCE [GENOMIC DNA]</scope>
</reference>
<reference key="4">
    <citation type="journal article" date="2001" name="Nature">
        <title>The DNA sequence and comparative analysis of human chromosome 20.</title>
        <authorList>
            <person name="Deloukas P."/>
            <person name="Matthews L.H."/>
            <person name="Ashurst J.L."/>
            <person name="Burton J."/>
            <person name="Gilbert J.G.R."/>
            <person name="Jones M."/>
            <person name="Stavrides G."/>
            <person name="Almeida J.P."/>
            <person name="Babbage A.K."/>
            <person name="Bagguley C.L."/>
            <person name="Bailey J."/>
            <person name="Barlow K.F."/>
            <person name="Bates K.N."/>
            <person name="Beard L.M."/>
            <person name="Beare D.M."/>
            <person name="Beasley O.P."/>
            <person name="Bird C.P."/>
            <person name="Blakey S.E."/>
            <person name="Bridgeman A.M."/>
            <person name="Brown A.J."/>
            <person name="Buck D."/>
            <person name="Burrill W.D."/>
            <person name="Butler A.P."/>
            <person name="Carder C."/>
            <person name="Carter N.P."/>
            <person name="Chapman J.C."/>
            <person name="Clamp M."/>
            <person name="Clark G."/>
            <person name="Clark L.N."/>
            <person name="Clark S.Y."/>
            <person name="Clee C.M."/>
            <person name="Clegg S."/>
            <person name="Cobley V.E."/>
            <person name="Collier R.E."/>
            <person name="Connor R.E."/>
            <person name="Corby N.R."/>
            <person name="Coulson A."/>
            <person name="Coville G.J."/>
            <person name="Deadman R."/>
            <person name="Dhami P.D."/>
            <person name="Dunn M."/>
            <person name="Ellington A.G."/>
            <person name="Frankland J.A."/>
            <person name="Fraser A."/>
            <person name="French L."/>
            <person name="Garner P."/>
            <person name="Grafham D.V."/>
            <person name="Griffiths C."/>
            <person name="Griffiths M.N.D."/>
            <person name="Gwilliam R."/>
            <person name="Hall R.E."/>
            <person name="Hammond S."/>
            <person name="Harley J.L."/>
            <person name="Heath P.D."/>
            <person name="Ho S."/>
            <person name="Holden J.L."/>
            <person name="Howden P.J."/>
            <person name="Huckle E."/>
            <person name="Hunt A.R."/>
            <person name="Hunt S.E."/>
            <person name="Jekosch K."/>
            <person name="Johnson C.M."/>
            <person name="Johnson D."/>
            <person name="Kay M.P."/>
            <person name="Kimberley A.M."/>
            <person name="King A."/>
            <person name="Knights A."/>
            <person name="Laird G.K."/>
            <person name="Lawlor S."/>
            <person name="Lehvaeslaiho M.H."/>
            <person name="Leversha M.A."/>
            <person name="Lloyd C."/>
            <person name="Lloyd D.M."/>
            <person name="Lovell J.D."/>
            <person name="Marsh V.L."/>
            <person name="Martin S.L."/>
            <person name="McConnachie L.J."/>
            <person name="McLay K."/>
            <person name="McMurray A.A."/>
            <person name="Milne S.A."/>
            <person name="Mistry D."/>
            <person name="Moore M.J.F."/>
            <person name="Mullikin J.C."/>
            <person name="Nickerson T."/>
            <person name="Oliver K."/>
            <person name="Parker A."/>
            <person name="Patel R."/>
            <person name="Pearce T.A.V."/>
            <person name="Peck A.I."/>
            <person name="Phillimore B.J.C.T."/>
            <person name="Prathalingam S.R."/>
            <person name="Plumb R.W."/>
            <person name="Ramsay H."/>
            <person name="Rice C.M."/>
            <person name="Ross M.T."/>
            <person name="Scott C.E."/>
            <person name="Sehra H.K."/>
            <person name="Shownkeen R."/>
            <person name="Sims S."/>
            <person name="Skuce C.D."/>
            <person name="Smith M.L."/>
            <person name="Soderlund C."/>
            <person name="Steward C.A."/>
            <person name="Sulston J.E."/>
            <person name="Swann R.M."/>
            <person name="Sycamore N."/>
            <person name="Taylor R."/>
            <person name="Tee L."/>
            <person name="Thomas D.W."/>
            <person name="Thorpe A."/>
            <person name="Tracey A."/>
            <person name="Tromans A.C."/>
            <person name="Vaudin M."/>
            <person name="Wall M."/>
            <person name="Wallis J.M."/>
            <person name="Whitehead S.L."/>
            <person name="Whittaker P."/>
            <person name="Willey D.L."/>
            <person name="Williams L."/>
            <person name="Williams S.A."/>
            <person name="Wilming L."/>
            <person name="Wray P.W."/>
            <person name="Hubbard T."/>
            <person name="Durbin R.M."/>
            <person name="Bentley D.R."/>
            <person name="Beck S."/>
            <person name="Rogers J."/>
        </authorList>
    </citation>
    <scope>NUCLEOTIDE SEQUENCE [LARGE SCALE GENOMIC DNA]</scope>
</reference>
<reference key="5">
    <citation type="journal article" date="2004" name="Genome Res.">
        <title>The status, quality, and expansion of the NIH full-length cDNA project: the Mammalian Gene Collection (MGC).</title>
        <authorList>
            <consortium name="The MGC Project Team"/>
        </authorList>
    </citation>
    <scope>NUCLEOTIDE SEQUENCE [LARGE SCALE MRNA] (ISOFORM 2)</scope>
    <source>
        <tissue>Lung</tissue>
    </source>
</reference>
<reference key="6">
    <citation type="journal article" date="2003" name="Proc. Natl. Acad. Sci. U.S.A.">
        <title>Insulin regulates the activity of forkhead transcription factor Hnf-3beta/Foxa-2 by Akt-mediated phosphorylation and nuclear/cytosolic localization.</title>
        <authorList>
            <person name="Wolfrum C."/>
            <person name="Besser D."/>
            <person name="Luca E."/>
            <person name="Stoffel M."/>
        </authorList>
    </citation>
    <scope>SUBCELLULAR LOCATION</scope>
</reference>
<reference key="7">
    <citation type="journal article" date="2005" name="J. Biol. Chem.">
        <title>A hepatocyte nuclear factor-3 site in the fibrinogen beta promoter is important for interleukin 6-induced expression, and its activity is influenced by the adjacent -148C/T polymorphism.</title>
        <authorList>
            <person name="Verschuur M."/>
            <person name="de Jong M."/>
            <person name="Felida L."/>
            <person name="de Maat M.P."/>
            <person name="Vos H.L."/>
        </authorList>
    </citation>
    <scope>PROMOTER-BINDING</scope>
</reference>
<reference key="8">
    <citation type="journal article" date="2009" name="Genome Biol.">
        <title>Differential binding and co-binding pattern of FOXA1 and FOXA3 and their relation to H3K4me3 in HepG2 cells revealed by ChIP-seq.</title>
        <authorList>
            <person name="Motallebipour M."/>
            <person name="Ameur A."/>
            <person name="Reddy Bysani M.S."/>
            <person name="Patra K."/>
            <person name="Wallerman O."/>
            <person name="Mangion J."/>
            <person name="Barker M.A."/>
            <person name="McKernan K.J."/>
            <person name="Komorowski J."/>
            <person name="Wadelius C."/>
        </authorList>
    </citation>
    <scope>INTERACTION WITH FOXA1 AND FOXA3</scope>
</reference>
<reference key="9">
    <citation type="journal article" date="2009" name="J. Biol. Chem.">
        <title>Identification of DNA-dependent protein kinase as a cofactor for the forkhead transcription factor FoxA2.</title>
        <authorList>
            <person name="Nock A."/>
            <person name="Ascano J.M."/>
            <person name="Jones T."/>
            <person name="Barrero M.J."/>
            <person name="Sugiyama N."/>
            <person name="Tomita M."/>
            <person name="Ishihama Y."/>
            <person name="Malik S."/>
        </authorList>
    </citation>
    <scope>INTERACTION WITH PRKDC</scope>
</reference>
<reference key="10">
    <citation type="journal article" date="2014" name="J. Proteomics">
        <title>An enzyme assisted RP-RPLC approach for in-depth analysis of human liver phosphoproteome.</title>
        <authorList>
            <person name="Bian Y."/>
            <person name="Song C."/>
            <person name="Cheng K."/>
            <person name="Dong M."/>
            <person name="Wang F."/>
            <person name="Huang J."/>
            <person name="Sun D."/>
            <person name="Wang L."/>
            <person name="Ye M."/>
            <person name="Zou H."/>
        </authorList>
    </citation>
    <scope>PHOSPHORYLATION [LARGE SCALE ANALYSIS] AT SER-303 AND SER-309</scope>
    <scope>IDENTIFICATION BY MASS SPECTROMETRY [LARGE SCALE ANALYSIS]</scope>
    <source>
        <tissue>Liver</tissue>
    </source>
</reference>
<reference key="11">
    <citation type="journal article" date="2022" name="Nat. Commun.">
        <title>TET1 dioxygenase is required for FOXA2-associated chromatin remodeling in pancreatic beta-cell differentiation.</title>
        <authorList>
            <person name="Li J."/>
            <person name="Wu X."/>
            <person name="Ke J."/>
            <person name="Lee M."/>
            <person name="Lan Q."/>
            <person name="Li J."/>
            <person name="Yu J."/>
            <person name="Huang Y."/>
            <person name="Sun D.Q."/>
            <person name="Xie R."/>
        </authorList>
    </citation>
    <scope>INTERACTION WITH TET1</scope>
</reference>
<protein>
    <recommendedName>
        <fullName>Hepatocyte nuclear factor 3-beta</fullName>
        <shortName>HNF-3-beta</shortName>
        <shortName>HNF-3B</shortName>
    </recommendedName>
    <alternativeName>
        <fullName>Forkhead box protein A2</fullName>
    </alternativeName>
    <alternativeName>
        <fullName>Transcription factor 3B</fullName>
        <shortName>TCF-3B</shortName>
    </alternativeName>
</protein>
<proteinExistence type="evidence at protein level"/>
<keyword id="KW-0002">3D-structure</keyword>
<keyword id="KW-0010">Activator</keyword>
<keyword id="KW-0025">Alternative splicing</keyword>
<keyword id="KW-0156">Chromatin regulator</keyword>
<keyword id="KW-0963">Cytoplasm</keyword>
<keyword id="KW-0217">Developmental protein</keyword>
<keyword id="KW-0238">DNA-binding</keyword>
<keyword id="KW-0539">Nucleus</keyword>
<keyword id="KW-0597">Phosphoprotein</keyword>
<keyword id="KW-1267">Proteomics identification</keyword>
<keyword id="KW-1185">Reference proteome</keyword>
<keyword id="KW-0804">Transcription</keyword>
<keyword id="KW-0805">Transcription regulation</keyword>
<comment type="function">
    <text evidence="1">Transcription factor that is involved in embryonic development, establishment of tissue-specific gene expression and regulation of gene expression in differentiated tissues. Is thought to act as a 'pioneer' factor opening the compacted chromatin for other proteins through interactions with nucleosomal core histones and thereby replacing linker histones at target enhancer and/or promoter sites. Binds DNA with the consensus sequence 5'-[AC]A[AT]T[AG]TT[GT][AG][CT]T[CT]-3' (By similarity). In embryonic development is required for notochord formation. Involved in the development of multiple endoderm-derived organ systems such as the liver, pancreas and lungs; FOXA1 and FOXA2 seem to have at least in part redundant roles. Originally described as a transcription activator for a number of liver genes such as AFP, albumin, tyrosine aminotransferase, PEPCK, etc. Interacts with the cis-acting regulatory regions of these genes. Involved in glucose homeostasis; regulates the expression of genes important for glucose sensing in pancreatic beta-cells and glucose homeostasis. Involved in regulation of fat metabolism. Binds to fibrinogen beta promoter and is involved in IL6-induced fibrinogen beta transcriptional activation.</text>
</comment>
<comment type="subunit">
    <text evidence="2 3 8 9 10">Binds DNA as a monomer. Binds TLE1 (By similarity). Interacts with FOXA1 and FOXA3 (PubMed:19919681). Interacts with PRKDC (PubMed:19478084). Interacts with AKT1 (By similarity). Interacts with TET1; this interaction may recruit TET1 to specific genomic loci to mediate their demethylation (PubMed:35798741).</text>
</comment>
<comment type="interaction">
    <interactant intactId="EBI-25830360">
        <id>Q9Y261-2</id>
    </interactant>
    <interactant intactId="EBI-640741">
        <id>P01023</id>
        <label>A2M</label>
    </interactant>
    <organismsDiffer>false</organismsDiffer>
    <experiments>3</experiments>
</comment>
<comment type="interaction">
    <interactant intactId="EBI-25830360">
        <id>Q9Y261-2</id>
    </interactant>
    <interactant intactId="EBI-10968534">
        <id>P50570-2</id>
        <label>DNM2</label>
    </interactant>
    <organismsDiffer>false</organismsDiffer>
    <experiments>3</experiments>
</comment>
<comment type="interaction">
    <interactant intactId="EBI-25830360">
        <id>Q9Y261-2</id>
    </interactant>
    <interactant intactId="EBI-744302">
        <id>P14136</id>
        <label>GFAP</label>
    </interactant>
    <organismsDiffer>false</organismsDiffer>
    <experiments>3</experiments>
</comment>
<comment type="interaction">
    <interactant intactId="EBI-25830360">
        <id>Q9Y261-2</id>
    </interactant>
    <interactant intactId="EBI-713665">
        <id>P19404</id>
        <label>NDUFV2</label>
    </interactant>
    <organismsDiffer>false</organismsDiffer>
    <experiments>3</experiments>
</comment>
<comment type="interaction">
    <interactant intactId="EBI-25830360">
        <id>Q9Y261-2</id>
    </interactant>
    <interactant intactId="EBI-5235340">
        <id>Q7Z699</id>
        <label>SPRED1</label>
    </interactant>
    <organismsDiffer>false</organismsDiffer>
    <experiments>3</experiments>
</comment>
<comment type="subcellular location">
    <subcellularLocation>
        <location evidence="4 7">Nucleus</location>
    </subcellularLocation>
    <subcellularLocation>
        <location evidence="7">Cytoplasm</location>
    </subcellularLocation>
    <text>Shuttles between the nucleus and cytoplasm in a CRM1-dependent manner; in response to insulin signaling via AKT1 is exported from the nucleus.</text>
</comment>
<comment type="alternative products">
    <event type="alternative splicing"/>
    <isoform>
        <id>Q9Y261-1</id>
        <name>1</name>
        <sequence type="displayed"/>
    </isoform>
    <isoform>
        <id>Q9Y261-2</id>
        <name>2</name>
        <sequence type="described" ref="VSP_041212"/>
    </isoform>
</comment>
<comment type="PTM">
    <text evidence="1">Phosphorylation on Thr-156 abolishes binding to target promoters and subsequent transcription activation upon insulin stimulation.</text>
</comment>
<comment type="sequence caution" evidence="12">
    <conflict type="erroneous initiation">
        <sequence resource="EMBL-CDS" id="AAH11780"/>
    </conflict>
    <text>Truncated N-terminus.</text>
</comment>
<comment type="online information" name="Wikipedia">
    <link uri="https://en.wikipedia.org/wiki/Hepatocyte_nuclear_factors"/>
    <text>Hepatocyte nuclear factors entry</text>
</comment>
<sequence length="457" mass="48306">MLGAVKMEGHEPSDWSSYYAEPEGYSSVSNMNAGLGMNGMNTYMSMSAAAMGSGSGNMSAGSMNMSSYVGAGMSPSLAGMSPGAGAMAGMGGSAGAAGVAGMGPHLSPSLSPLGGQAAGAMGGLAPYANMNSMSPMYGQAGLSRARDPKTYRRSYTHAKPPYSYISLITMAIQQSPNKMLTLSEIYQWIMDLFPFYRQNQQRWQNSIRHSLSFNDCFLKVPRSPDKPGKGSFWTLHPDSGNMFENGCYLRRQKRFKCEKQLALKEAAGAAGSGKKAAAGAQASQAQLGEAAGPASETPAGTESPHSSASPCQEHKRGGLGELKGTPAAALSPPEPAPSPGQQQQAAAHLLGPPHHPGLPPEAHLKPEHHYAFNHPFSINNLMSSEQQHHHSHHHHQPHKMDLKAYEQVMHYPGYGSPMPGSLAMGPVTNKTGLDASPLAADTSYYQGVYSRPIMNSS</sequence>
<evidence type="ECO:0000250" key="1"/>
<evidence type="ECO:0000250" key="2">
    <source>
        <dbReference type="UniProtKB" id="P32182"/>
    </source>
</evidence>
<evidence type="ECO:0000250" key="3">
    <source>
        <dbReference type="UniProtKB" id="P35583"/>
    </source>
</evidence>
<evidence type="ECO:0000255" key="4">
    <source>
        <dbReference type="PROSITE-ProRule" id="PRU00089"/>
    </source>
</evidence>
<evidence type="ECO:0000256" key="5">
    <source>
        <dbReference type="SAM" id="MobiDB-lite"/>
    </source>
</evidence>
<evidence type="ECO:0000269" key="6">
    <source>
    </source>
</evidence>
<evidence type="ECO:0000269" key="7">
    <source>
    </source>
</evidence>
<evidence type="ECO:0000269" key="8">
    <source>
    </source>
</evidence>
<evidence type="ECO:0000269" key="9">
    <source>
    </source>
</evidence>
<evidence type="ECO:0000269" key="10">
    <source>
    </source>
</evidence>
<evidence type="ECO:0000303" key="11">
    <source>
    </source>
</evidence>
<evidence type="ECO:0000305" key="12"/>
<evidence type="ECO:0007744" key="13">
    <source>
    </source>
</evidence>
<evidence type="ECO:0007829" key="14">
    <source>
        <dbReference type="PDB" id="5X07"/>
    </source>
</evidence>
<evidence type="ECO:0007829" key="15">
    <source>
        <dbReference type="PDB" id="7YZE"/>
    </source>
</evidence>
<name>FOXA2_HUMAN</name>
<organism>
    <name type="scientific">Homo sapiens</name>
    <name type="common">Human</name>
    <dbReference type="NCBI Taxonomy" id="9606"/>
    <lineage>
        <taxon>Eukaryota</taxon>
        <taxon>Metazoa</taxon>
        <taxon>Chordata</taxon>
        <taxon>Craniata</taxon>
        <taxon>Vertebrata</taxon>
        <taxon>Euteleostomi</taxon>
        <taxon>Mammalia</taxon>
        <taxon>Eutheria</taxon>
        <taxon>Euarchontoglires</taxon>
        <taxon>Primates</taxon>
        <taxon>Haplorrhini</taxon>
        <taxon>Catarrhini</taxon>
        <taxon>Hominidae</taxon>
        <taxon>Homo</taxon>
    </lineage>
</organism>
<dbReference type="EMBL" id="AB028021">
    <property type="protein sequence ID" value="BAA78106.1"/>
    <property type="molecule type" value="mRNA"/>
</dbReference>
<dbReference type="EMBL" id="AF147787">
    <property type="protein sequence ID" value="AAD41081.1"/>
    <property type="molecule type" value="Genomic_DNA"/>
</dbReference>
<dbReference type="EMBL" id="AF176110">
    <property type="protein sequence ID" value="AAD51978.1"/>
    <property type="molecule type" value="Genomic_DNA"/>
</dbReference>
<dbReference type="EMBL" id="AL121722">
    <property type="status" value="NOT_ANNOTATED_CDS"/>
    <property type="molecule type" value="Genomic_DNA"/>
</dbReference>
<dbReference type="EMBL" id="BC006545">
    <property type="protein sequence ID" value="AAH06545.2"/>
    <property type="molecule type" value="mRNA"/>
</dbReference>
<dbReference type="EMBL" id="BC011780">
    <property type="protein sequence ID" value="AAH11780.1"/>
    <property type="status" value="ALT_INIT"/>
    <property type="molecule type" value="mRNA"/>
</dbReference>
<dbReference type="EMBL" id="BC019288">
    <property type="protein sequence ID" value="AAH19288.1"/>
    <property type="molecule type" value="mRNA"/>
</dbReference>
<dbReference type="CCDS" id="CCDS13147.1">
    <molecule id="Q9Y261-1"/>
</dbReference>
<dbReference type="CCDS" id="CCDS46585.1">
    <molecule id="Q9Y261-2"/>
</dbReference>
<dbReference type="RefSeq" id="NP_068556.2">
    <molecule id="Q9Y261-2"/>
    <property type="nucleotide sequence ID" value="NM_021784.5"/>
</dbReference>
<dbReference type="RefSeq" id="NP_710141.1">
    <molecule id="Q9Y261-1"/>
    <property type="nucleotide sequence ID" value="NM_153675.3"/>
</dbReference>
<dbReference type="RefSeq" id="XP_047296089.1">
    <molecule id="Q9Y261-1"/>
    <property type="nucleotide sequence ID" value="XM_047440133.1"/>
</dbReference>
<dbReference type="PDB" id="5X07">
    <property type="method" value="X-ray"/>
    <property type="resolution" value="2.80 A"/>
    <property type="chains" value="C/F/I/L=157-258"/>
</dbReference>
<dbReference type="PDB" id="7YZE">
    <property type="method" value="X-ray"/>
    <property type="resolution" value="1.99 A"/>
    <property type="chains" value="A=149-273"/>
</dbReference>
<dbReference type="PDB" id="7YZF">
    <property type="method" value="X-ray"/>
    <property type="resolution" value="2.18 A"/>
    <property type="chains" value="C=149-273"/>
</dbReference>
<dbReference type="PDBsum" id="5X07"/>
<dbReference type="PDBsum" id="7YZE"/>
<dbReference type="PDBsum" id="7YZF"/>
<dbReference type="SMR" id="Q9Y261"/>
<dbReference type="BioGRID" id="109412">
    <property type="interactions" value="27"/>
</dbReference>
<dbReference type="FunCoup" id="Q9Y261">
    <property type="interactions" value="2545"/>
</dbReference>
<dbReference type="IntAct" id="Q9Y261">
    <property type="interactions" value="16"/>
</dbReference>
<dbReference type="MINT" id="Q9Y261"/>
<dbReference type="STRING" id="9606.ENSP00000400341"/>
<dbReference type="GlyGen" id="Q9Y261">
    <property type="glycosylation" value="1 site, 1 O-linked glycan (1 site)"/>
</dbReference>
<dbReference type="iPTMnet" id="Q9Y261"/>
<dbReference type="PhosphoSitePlus" id="Q9Y261"/>
<dbReference type="BioMuta" id="FOXA2"/>
<dbReference type="DMDM" id="8134491"/>
<dbReference type="jPOST" id="Q9Y261"/>
<dbReference type="MassIVE" id="Q9Y261"/>
<dbReference type="PaxDb" id="9606-ENSP00000400341"/>
<dbReference type="PeptideAtlas" id="Q9Y261"/>
<dbReference type="ProteomicsDB" id="85664">
    <molecule id="Q9Y261-1"/>
</dbReference>
<dbReference type="ProteomicsDB" id="85665">
    <molecule id="Q9Y261-2"/>
</dbReference>
<dbReference type="Antibodypedia" id="3772">
    <property type="antibodies" value="873 antibodies from 47 providers"/>
</dbReference>
<dbReference type="DNASU" id="3170"/>
<dbReference type="Ensembl" id="ENST00000377115.4">
    <molecule id="Q9Y261-1"/>
    <property type="protein sequence ID" value="ENSP00000366319.4"/>
    <property type="gene ID" value="ENSG00000125798.15"/>
</dbReference>
<dbReference type="Ensembl" id="ENST00000419308.7">
    <molecule id="Q9Y261-2"/>
    <property type="protein sequence ID" value="ENSP00000400341.3"/>
    <property type="gene ID" value="ENSG00000125798.15"/>
</dbReference>
<dbReference type="GeneID" id="3170"/>
<dbReference type="KEGG" id="hsa:3170"/>
<dbReference type="MANE-Select" id="ENST00000419308.7">
    <molecule id="Q9Y261-2"/>
    <property type="protein sequence ID" value="ENSP00000400341.3"/>
    <property type="RefSeq nucleotide sequence ID" value="NM_021784.5"/>
    <property type="RefSeq protein sequence ID" value="NP_068556.2"/>
</dbReference>
<dbReference type="UCSC" id="uc002wsm.4">
    <molecule id="Q9Y261-1"/>
    <property type="organism name" value="human"/>
</dbReference>
<dbReference type="AGR" id="HGNC:5022"/>
<dbReference type="CTD" id="3170"/>
<dbReference type="DisGeNET" id="3170"/>
<dbReference type="GeneCards" id="FOXA2"/>
<dbReference type="HGNC" id="HGNC:5022">
    <property type="gene designation" value="FOXA2"/>
</dbReference>
<dbReference type="HPA" id="ENSG00000125798">
    <property type="expression patterns" value="Tissue enhanced (liver, pancreas, stomach)"/>
</dbReference>
<dbReference type="MalaCards" id="FOXA2"/>
<dbReference type="MIM" id="600288">
    <property type="type" value="gene"/>
</dbReference>
<dbReference type="neXtProt" id="NX_Q9Y261"/>
<dbReference type="OpenTargets" id="ENSG00000125798"/>
<dbReference type="Orphanet" id="95494">
    <property type="disease" value="Combined pituitary hormone deficiencies, genetic forms"/>
</dbReference>
<dbReference type="PharmGKB" id="PA201091"/>
<dbReference type="VEuPathDB" id="HostDB:ENSG00000125798"/>
<dbReference type="eggNOG" id="KOG3563">
    <property type="taxonomic scope" value="Eukaryota"/>
</dbReference>
<dbReference type="GeneTree" id="ENSGT00940000155999"/>
<dbReference type="HOGENOM" id="CLU_027910_4_1_1"/>
<dbReference type="InParanoid" id="Q9Y261"/>
<dbReference type="OMA" id="EGHEHTE"/>
<dbReference type="OrthoDB" id="5954824at2759"/>
<dbReference type="PAN-GO" id="Q9Y261">
    <property type="GO annotations" value="5 GO annotations based on evolutionary models"/>
</dbReference>
<dbReference type="PhylomeDB" id="Q9Y261"/>
<dbReference type="TreeFam" id="TF316127"/>
<dbReference type="PathwayCommons" id="Q9Y261"/>
<dbReference type="Reactome" id="R-HSA-210745">
    <property type="pathway name" value="Regulation of gene expression in beta cells"/>
</dbReference>
<dbReference type="Reactome" id="R-HSA-9796292">
    <property type="pathway name" value="Formation of axial mesoderm"/>
</dbReference>
<dbReference type="Reactome" id="R-HSA-9823730">
    <property type="pathway name" value="Formation of definitive endoderm"/>
</dbReference>
<dbReference type="Reactome" id="R-HSA-9925561">
    <property type="pathway name" value="Developmental Lineage of Pancreatic Acinar Cells"/>
</dbReference>
<dbReference type="SignaLink" id="Q9Y261"/>
<dbReference type="SIGNOR" id="Q9Y261"/>
<dbReference type="BioGRID-ORCS" id="3170">
    <property type="hits" value="36 hits in 1168 CRISPR screens"/>
</dbReference>
<dbReference type="ChiTaRS" id="FOXA2">
    <property type="organism name" value="human"/>
</dbReference>
<dbReference type="GeneWiki" id="FOXA2"/>
<dbReference type="GenomeRNAi" id="3170"/>
<dbReference type="Pharos" id="Q9Y261">
    <property type="development level" value="Tbio"/>
</dbReference>
<dbReference type="PRO" id="PR:Q9Y261"/>
<dbReference type="Proteomes" id="UP000005640">
    <property type="component" value="Chromosome 20"/>
</dbReference>
<dbReference type="RNAct" id="Q9Y261">
    <property type="molecule type" value="protein"/>
</dbReference>
<dbReference type="Bgee" id="ENSG00000125798">
    <property type="expression patterns" value="Expressed in pancreatic ductal cell and 85 other cell types or tissues"/>
</dbReference>
<dbReference type="ExpressionAtlas" id="Q9Y261">
    <property type="expression patterns" value="baseline and differential"/>
</dbReference>
<dbReference type="GO" id="GO:0030054">
    <property type="term" value="C:cell junction"/>
    <property type="evidence" value="ECO:0000314"/>
    <property type="project" value="HPA"/>
</dbReference>
<dbReference type="GO" id="GO:0000785">
    <property type="term" value="C:chromatin"/>
    <property type="evidence" value="ECO:0000247"/>
    <property type="project" value="NTNU_SB"/>
</dbReference>
<dbReference type="GO" id="GO:0005737">
    <property type="term" value="C:cytoplasm"/>
    <property type="evidence" value="ECO:0007669"/>
    <property type="project" value="UniProtKB-SubCell"/>
</dbReference>
<dbReference type="GO" id="GO:0005654">
    <property type="term" value="C:nucleoplasm"/>
    <property type="evidence" value="ECO:0000314"/>
    <property type="project" value="HPA"/>
</dbReference>
<dbReference type="GO" id="GO:0005634">
    <property type="term" value="C:nucleus"/>
    <property type="evidence" value="ECO:0000314"/>
    <property type="project" value="UniProtKB"/>
</dbReference>
<dbReference type="GO" id="GO:0003677">
    <property type="term" value="F:DNA binding"/>
    <property type="evidence" value="ECO:0000314"/>
    <property type="project" value="UniProtKB"/>
</dbReference>
<dbReference type="GO" id="GO:0001228">
    <property type="term" value="F:DNA-binding transcription activator activity, RNA polymerase II-specific"/>
    <property type="evidence" value="ECO:0000250"/>
    <property type="project" value="BHF-UCL"/>
</dbReference>
<dbReference type="GO" id="GO:0003700">
    <property type="term" value="F:DNA-binding transcription factor activity"/>
    <property type="evidence" value="ECO:0000314"/>
    <property type="project" value="UniProtKB"/>
</dbReference>
<dbReference type="GO" id="GO:0000981">
    <property type="term" value="F:DNA-binding transcription factor activity, RNA polymerase II-specific"/>
    <property type="evidence" value="ECO:0000247"/>
    <property type="project" value="NTNU_SB"/>
</dbReference>
<dbReference type="GO" id="GO:0001227">
    <property type="term" value="F:DNA-binding transcription repressor activity, RNA polymerase II-specific"/>
    <property type="evidence" value="ECO:0000250"/>
    <property type="project" value="BHF-UCL"/>
</dbReference>
<dbReference type="GO" id="GO:0003676">
    <property type="term" value="F:nucleic acid binding"/>
    <property type="evidence" value="ECO:0000269"/>
    <property type="project" value="DisProt"/>
</dbReference>
<dbReference type="GO" id="GO:0019904">
    <property type="term" value="F:protein domain specific binding"/>
    <property type="evidence" value="ECO:0007669"/>
    <property type="project" value="InterPro"/>
</dbReference>
<dbReference type="GO" id="GO:0000978">
    <property type="term" value="F:RNA polymerase II cis-regulatory region sequence-specific DNA binding"/>
    <property type="evidence" value="ECO:0000250"/>
    <property type="project" value="BHF-UCL"/>
</dbReference>
<dbReference type="GO" id="GO:0061629">
    <property type="term" value="F:RNA polymerase II-specific DNA-binding transcription factor binding"/>
    <property type="evidence" value="ECO:0000250"/>
    <property type="project" value="BHF-UCL"/>
</dbReference>
<dbReference type="GO" id="GO:1990837">
    <property type="term" value="F:sequence-specific double-stranded DNA binding"/>
    <property type="evidence" value="ECO:0000314"/>
    <property type="project" value="ARUK-UCL"/>
</dbReference>
<dbReference type="GO" id="GO:0000976">
    <property type="term" value="F:transcription cis-regulatory region binding"/>
    <property type="evidence" value="ECO:0000315"/>
    <property type="project" value="UniProtKB"/>
</dbReference>
<dbReference type="GO" id="GO:0003714">
    <property type="term" value="F:transcription corepressor activity"/>
    <property type="evidence" value="ECO:0000250"/>
    <property type="project" value="BHF-UCL"/>
</dbReference>
<dbReference type="GO" id="GO:0008344">
    <property type="term" value="P:adult locomotory behavior"/>
    <property type="evidence" value="ECO:0000250"/>
    <property type="project" value="ParkinsonsUK-UCL"/>
</dbReference>
<dbReference type="GO" id="GO:0009653">
    <property type="term" value="P:anatomical structure morphogenesis"/>
    <property type="evidence" value="ECO:0000318"/>
    <property type="project" value="GO_Central"/>
</dbReference>
<dbReference type="GO" id="GO:0030154">
    <property type="term" value="P:cell differentiation"/>
    <property type="evidence" value="ECO:0000318"/>
    <property type="project" value="GO_Central"/>
</dbReference>
<dbReference type="GO" id="GO:0001708">
    <property type="term" value="P:cell fate specification"/>
    <property type="evidence" value="ECO:0000250"/>
    <property type="project" value="ParkinsonsUK-UCL"/>
</dbReference>
<dbReference type="GO" id="GO:0006325">
    <property type="term" value="P:chromatin organization"/>
    <property type="evidence" value="ECO:0007669"/>
    <property type="project" value="UniProtKB-KW"/>
</dbReference>
<dbReference type="GO" id="GO:0071542">
    <property type="term" value="P:dopaminergic neuron differentiation"/>
    <property type="evidence" value="ECO:0000316"/>
    <property type="project" value="ParkinsonsUK-UCL"/>
</dbReference>
<dbReference type="GO" id="GO:0031018">
    <property type="term" value="P:endocrine pancreas development"/>
    <property type="evidence" value="ECO:0000314"/>
    <property type="project" value="BHF-UCL"/>
</dbReference>
<dbReference type="GO" id="GO:0010719">
    <property type="term" value="P:negative regulation of epithelial to mesenchymal transition"/>
    <property type="evidence" value="ECO:0000315"/>
    <property type="project" value="BHF-UCL"/>
</dbReference>
<dbReference type="GO" id="GO:0000122">
    <property type="term" value="P:negative regulation of transcription by RNA polymerase II"/>
    <property type="evidence" value="ECO:0000250"/>
    <property type="project" value="BHF-UCL"/>
</dbReference>
<dbReference type="GO" id="GO:2000049">
    <property type="term" value="P:positive regulation of cell-cell adhesion mediated by cadherin"/>
    <property type="evidence" value="ECO:0000305"/>
    <property type="project" value="BHF-UCL"/>
</dbReference>
<dbReference type="GO" id="GO:0045893">
    <property type="term" value="P:positive regulation of DNA-templated transcription"/>
    <property type="evidence" value="ECO:0000314"/>
    <property type="project" value="UniProtKB"/>
</dbReference>
<dbReference type="GO" id="GO:0040019">
    <property type="term" value="P:positive regulation of embryonic development"/>
    <property type="evidence" value="ECO:0000250"/>
    <property type="project" value="UniProtKB"/>
</dbReference>
<dbReference type="GO" id="GO:2000543">
    <property type="term" value="P:positive regulation of gastrulation"/>
    <property type="evidence" value="ECO:0000250"/>
    <property type="project" value="UniProtKB"/>
</dbReference>
<dbReference type="GO" id="GO:0045944">
    <property type="term" value="P:positive regulation of transcription by RNA polymerase II"/>
    <property type="evidence" value="ECO:0000314"/>
    <property type="project" value="BHF-UCL"/>
</dbReference>
<dbReference type="GO" id="GO:0090009">
    <property type="term" value="P:primitive streak formation"/>
    <property type="evidence" value="ECO:0000250"/>
    <property type="project" value="UniProtKB"/>
</dbReference>
<dbReference type="GO" id="GO:0030193">
    <property type="term" value="P:regulation of blood coagulation"/>
    <property type="evidence" value="ECO:0000314"/>
    <property type="project" value="UniProtKB"/>
</dbReference>
<dbReference type="GO" id="GO:0061178">
    <property type="term" value="P:regulation of insulin secretion involved in cellular response to glucose stimulus"/>
    <property type="evidence" value="ECO:0000250"/>
    <property type="project" value="BHF-UCL"/>
</dbReference>
<dbReference type="GO" id="GO:0006357">
    <property type="term" value="P:regulation of transcription by RNA polymerase II"/>
    <property type="evidence" value="ECO:0000314"/>
    <property type="project" value="BHF-UCL"/>
</dbReference>
<dbReference type="GO" id="GO:0070741">
    <property type="term" value="P:response to interleukin-6"/>
    <property type="evidence" value="ECO:0000304"/>
    <property type="project" value="UniProtKB"/>
</dbReference>
<dbReference type="CDD" id="cd20039">
    <property type="entry name" value="FH_FOXA2"/>
    <property type="match status" value="1"/>
</dbReference>
<dbReference type="DisProt" id="DP01124"/>
<dbReference type="FunFam" id="1.10.10.10:FF:000042">
    <property type="entry name" value="hepatocyte nuclear factor 3-beta"/>
    <property type="match status" value="1"/>
</dbReference>
<dbReference type="Gene3D" id="1.10.10.10">
    <property type="entry name" value="Winged helix-like DNA-binding domain superfamily/Winged helix DNA-binding domain"/>
    <property type="match status" value="1"/>
</dbReference>
<dbReference type="InterPro" id="IPR013638">
    <property type="entry name" value="Fork-head_N"/>
</dbReference>
<dbReference type="InterPro" id="IPR001766">
    <property type="entry name" value="Fork_head_dom"/>
</dbReference>
<dbReference type="InterPro" id="IPR018533">
    <property type="entry name" value="Forkhead_box_C"/>
</dbReference>
<dbReference type="InterPro" id="IPR050211">
    <property type="entry name" value="FOX_domain-containing"/>
</dbReference>
<dbReference type="InterPro" id="IPR018122">
    <property type="entry name" value="TF_fork_head_CS_1"/>
</dbReference>
<dbReference type="InterPro" id="IPR030456">
    <property type="entry name" value="TF_fork_head_CS_2"/>
</dbReference>
<dbReference type="InterPro" id="IPR036388">
    <property type="entry name" value="WH-like_DNA-bd_sf"/>
</dbReference>
<dbReference type="InterPro" id="IPR036390">
    <property type="entry name" value="WH_DNA-bd_sf"/>
</dbReference>
<dbReference type="PANTHER" id="PTHR11829">
    <property type="entry name" value="FORKHEAD BOX PROTEIN"/>
    <property type="match status" value="1"/>
</dbReference>
<dbReference type="PANTHER" id="PTHR11829:SF167">
    <property type="entry name" value="HEPATOCYTE NUCLEAR FACTOR 3-BETA"/>
    <property type="match status" value="1"/>
</dbReference>
<dbReference type="Pfam" id="PF00250">
    <property type="entry name" value="Forkhead"/>
    <property type="match status" value="1"/>
</dbReference>
<dbReference type="Pfam" id="PF08430">
    <property type="entry name" value="Forkhead_N"/>
    <property type="match status" value="1"/>
</dbReference>
<dbReference type="Pfam" id="PF09354">
    <property type="entry name" value="HNF_C"/>
    <property type="match status" value="1"/>
</dbReference>
<dbReference type="PRINTS" id="PR00053">
    <property type="entry name" value="FORKHEAD"/>
</dbReference>
<dbReference type="SMART" id="SM00339">
    <property type="entry name" value="FH"/>
    <property type="match status" value="1"/>
</dbReference>
<dbReference type="SUPFAM" id="SSF46785">
    <property type="entry name" value="Winged helix' DNA-binding domain"/>
    <property type="match status" value="1"/>
</dbReference>
<dbReference type="PROSITE" id="PS00657">
    <property type="entry name" value="FORK_HEAD_1"/>
    <property type="match status" value="1"/>
</dbReference>
<dbReference type="PROSITE" id="PS00658">
    <property type="entry name" value="FORK_HEAD_2"/>
    <property type="match status" value="1"/>
</dbReference>
<dbReference type="PROSITE" id="PS50039">
    <property type="entry name" value="FORK_HEAD_3"/>
    <property type="match status" value="1"/>
</dbReference>
<feature type="chain" id="PRO_0000091795" description="Hepatocyte nuclear factor 3-beta">
    <location>
        <begin position="1"/>
        <end position="457"/>
    </location>
</feature>
<feature type="DNA-binding region" description="Fork-head" evidence="4">
    <location>
        <begin position="159"/>
        <end position="252"/>
    </location>
</feature>
<feature type="region of interest" description="Transactivation domain 1" evidence="1">
    <location>
        <begin position="14"/>
        <end position="93"/>
    </location>
</feature>
<feature type="region of interest" description="Disordered" evidence="5">
    <location>
        <begin position="280"/>
        <end position="365"/>
    </location>
</feature>
<feature type="region of interest" description="Transactivation domain 2" evidence="1">
    <location>
        <begin position="361"/>
        <end position="457"/>
    </location>
</feature>
<feature type="short sequence motif" description="Nuclear localization signal" evidence="1">
    <location>
        <begin position="106"/>
        <end position="113"/>
    </location>
</feature>
<feature type="compositionally biased region" description="Low complexity" evidence="5">
    <location>
        <begin position="280"/>
        <end position="292"/>
    </location>
</feature>
<feature type="compositionally biased region" description="Polar residues" evidence="5">
    <location>
        <begin position="298"/>
        <end position="310"/>
    </location>
</feature>
<feature type="compositionally biased region" description="Low complexity" evidence="5">
    <location>
        <begin position="339"/>
        <end position="352"/>
    </location>
</feature>
<feature type="modified residue" description="Phosphothreonine" evidence="2">
    <location>
        <position position="156"/>
    </location>
</feature>
<feature type="modified residue" description="Phosphoserine" evidence="2">
    <location>
        <position position="212"/>
    </location>
</feature>
<feature type="modified residue" description="Phosphoserine" evidence="2">
    <location>
        <position position="283"/>
    </location>
</feature>
<feature type="modified residue" description="Phosphothreonine" evidence="3">
    <location>
        <position position="301"/>
    </location>
</feature>
<feature type="modified residue" description="Phosphoserine" evidence="13">
    <location>
        <position position="303"/>
    </location>
</feature>
<feature type="modified residue" description="Phosphoserine" evidence="2">
    <location>
        <position position="306"/>
    </location>
</feature>
<feature type="modified residue" description="Phosphoserine" evidence="2">
    <location>
        <position position="307"/>
    </location>
</feature>
<feature type="modified residue" description="Phosphoserine" evidence="13">
    <location>
        <position position="309"/>
    </location>
</feature>
<feature type="modified residue" description="Phosphoserine" evidence="2">
    <location>
        <position position="436"/>
    </location>
</feature>
<feature type="modified residue" description="Phosphoserine" evidence="2">
    <location>
        <position position="457"/>
    </location>
</feature>
<feature type="splice variant" id="VSP_041212" description="In isoform 2." evidence="11">
    <original>M</original>
    <variation>MHSASSM</variation>
    <location>
        <position position="1"/>
    </location>
</feature>
<feature type="sequence variant" id="VAR_008858" description="In Japanese subjects with maturity-onset diabetes of the young; uncertain significance; dbSNP:rs199796119." evidence="6">
    <original>A</original>
    <variation>V</variation>
    <location>
        <position position="328"/>
    </location>
</feature>
<feature type="helix" evidence="15">
    <location>
        <begin position="164"/>
        <end position="173"/>
    </location>
</feature>
<feature type="strand" evidence="14">
    <location>
        <begin position="178"/>
        <end position="180"/>
    </location>
</feature>
<feature type="helix" evidence="15">
    <location>
        <begin position="182"/>
        <end position="192"/>
    </location>
</feature>
<feature type="helix" evidence="15">
    <location>
        <begin position="194"/>
        <end position="197"/>
    </location>
</feature>
<feature type="helix" evidence="15">
    <location>
        <begin position="200"/>
        <end position="213"/>
    </location>
</feature>
<feature type="strand" evidence="15">
    <location>
        <begin position="217"/>
        <end position="220"/>
    </location>
</feature>
<feature type="strand" evidence="14">
    <location>
        <begin position="224"/>
        <end position="226"/>
    </location>
</feature>
<feature type="strand" evidence="15">
    <location>
        <begin position="232"/>
        <end position="235"/>
    </location>
</feature>